<organism>
    <name type="scientific">Vaccinia virus (strain Copenhagen)</name>
    <name type="common">VACV</name>
    <dbReference type="NCBI Taxonomy" id="10249"/>
    <lineage>
        <taxon>Viruses</taxon>
        <taxon>Varidnaviria</taxon>
        <taxon>Bamfordvirae</taxon>
        <taxon>Nucleocytoviricota</taxon>
        <taxon>Pokkesviricetes</taxon>
        <taxon>Chitovirales</taxon>
        <taxon>Poxviridae</taxon>
        <taxon>Chordopoxvirinae</taxon>
        <taxon>Orthopoxvirus</taxon>
        <taxon>Vaccinia virus</taxon>
    </lineage>
</organism>
<proteinExistence type="evidence at transcript level"/>
<organismHost>
    <name type="scientific">Homo sapiens</name>
    <name type="common">Human</name>
    <dbReference type="NCBI Taxonomy" id="9606"/>
</organismHost>
<keyword id="KW-1185">Reference proteome</keyword>
<keyword id="KW-0677">Repeat</keyword>
<accession>P21007</accession>
<sequence length="88" mass="9898">MDTDTDTDTDTDTDTDTDTDVTNVEDIINEIDREKEEILKNVEIENNKNINKNHPSGYIREALVINTSSNSDSIDKEVIECISHDVGI</sequence>
<reference key="1">
    <citation type="journal article" date="1990" name="Virology">
        <title>The complete DNA sequence of vaccinia virus.</title>
        <authorList>
            <person name="Goebel S.J."/>
            <person name="Johnson G.P."/>
            <person name="Perkus M.E."/>
            <person name="Davis S.W."/>
            <person name="Winslow J.P."/>
            <person name="Paoletti E."/>
        </authorList>
    </citation>
    <scope>NUCLEOTIDE SEQUENCE [LARGE SCALE GENOMIC DNA]</scope>
</reference>
<reference key="2">
    <citation type="journal article" date="1990" name="Virology">
        <title>Appendix to 'The complete DNA sequence of vaccinia virus'.</title>
        <authorList>
            <person name="Goebel S.J."/>
            <person name="Johnson G.P."/>
            <person name="Perkus M.E."/>
            <person name="Davis S.W."/>
            <person name="Winslow J.P."/>
            <person name="Paoletti E."/>
        </authorList>
    </citation>
    <scope>NUCLEOTIDE SEQUENCE [LARGE SCALE GENOMIC DNA]</scope>
</reference>
<comment type="induction">
    <text>Expressed in the early phase of the viral replicative cycle.</text>
</comment>
<comment type="similarity">
    <text evidence="2">Belongs to the orthopoxvirus OPG197 family.</text>
</comment>
<evidence type="ECO:0000256" key="1">
    <source>
        <dbReference type="SAM" id="MobiDB-lite"/>
    </source>
</evidence>
<evidence type="ECO:0000305" key="2"/>
<gene>
    <name type="primary">OPG197</name>
    <name type="ORF">B11R</name>
</gene>
<name>PG197_VACCC</name>
<protein>
    <recommendedName>
        <fullName>Protein OPG197</fullName>
    </recommendedName>
</protein>
<feature type="chain" id="PRO_0000099362" description="Protein OPG197">
    <location>
        <begin position="1"/>
        <end position="88"/>
    </location>
</feature>
<feature type="repeat" description="1">
    <location>
        <begin position="2"/>
        <end position="3"/>
    </location>
</feature>
<feature type="repeat" description="2">
    <location>
        <begin position="4"/>
        <end position="5"/>
    </location>
</feature>
<feature type="repeat" description="3">
    <location>
        <begin position="6"/>
        <end position="7"/>
    </location>
</feature>
<feature type="repeat" description="4">
    <location>
        <begin position="8"/>
        <end position="9"/>
    </location>
</feature>
<feature type="repeat" description="5">
    <location>
        <begin position="10"/>
        <end position="11"/>
    </location>
</feature>
<feature type="repeat" description="6">
    <location>
        <begin position="12"/>
        <end position="13"/>
    </location>
</feature>
<feature type="repeat" description="7">
    <location>
        <begin position="14"/>
        <end position="15"/>
    </location>
</feature>
<feature type="repeat" description="8">
    <location>
        <begin position="16"/>
        <end position="17"/>
    </location>
</feature>
<feature type="repeat" description="9">
    <location>
        <begin position="18"/>
        <end position="19"/>
    </location>
</feature>
<feature type="region of interest" description="Disordered" evidence="1">
    <location>
        <begin position="1"/>
        <end position="22"/>
    </location>
</feature>
<feature type="region of interest" description="9 X 2 AA tandem repeats of D-T">
    <location>
        <begin position="2"/>
        <end position="19"/>
    </location>
</feature>
<feature type="compositionally biased region" description="Acidic residues" evidence="1">
    <location>
        <begin position="1"/>
        <end position="19"/>
    </location>
</feature>
<dbReference type="EMBL" id="M35027">
    <property type="protein sequence ID" value="AAA48208.1"/>
    <property type="molecule type" value="Genomic_DNA"/>
</dbReference>
<dbReference type="PIR" id="A42527">
    <property type="entry name" value="A42527"/>
</dbReference>
<dbReference type="SMR" id="P21007"/>
<dbReference type="Proteomes" id="UP000008269">
    <property type="component" value="Segment"/>
</dbReference>
<dbReference type="InterPro" id="IPR009754">
    <property type="entry name" value="Orthopox_B11R"/>
</dbReference>
<dbReference type="Pfam" id="PF07033">
    <property type="entry name" value="Orthopox_B11R"/>
    <property type="match status" value="1"/>
</dbReference>